<name>MUTS_SODGM</name>
<comment type="function">
    <text evidence="1">This protein is involved in the repair of mismatches in DNA. It is possible that it carries out the mismatch recognition step. This protein has a weak ATPase activity.</text>
</comment>
<comment type="similarity">
    <text evidence="1">Belongs to the DNA mismatch repair MutS family.</text>
</comment>
<proteinExistence type="inferred from homology"/>
<gene>
    <name evidence="1" type="primary">mutS</name>
    <name type="ordered locus">SG0531</name>
</gene>
<protein>
    <recommendedName>
        <fullName evidence="1">DNA mismatch repair protein MutS</fullName>
    </recommendedName>
</protein>
<organism>
    <name type="scientific">Sodalis glossinidius (strain morsitans)</name>
    <dbReference type="NCBI Taxonomy" id="343509"/>
    <lineage>
        <taxon>Bacteria</taxon>
        <taxon>Pseudomonadati</taxon>
        <taxon>Pseudomonadota</taxon>
        <taxon>Gammaproteobacteria</taxon>
        <taxon>Enterobacterales</taxon>
        <taxon>Bruguierivoracaceae</taxon>
        <taxon>Sodalis</taxon>
    </lineage>
</organism>
<dbReference type="EMBL" id="AP008232">
    <property type="protein sequence ID" value="BAE73806.1"/>
    <property type="molecule type" value="Genomic_DNA"/>
</dbReference>
<dbReference type="RefSeq" id="WP_011410504.1">
    <property type="nucleotide sequence ID" value="NC_007712.1"/>
</dbReference>
<dbReference type="SMR" id="Q2NVL9"/>
<dbReference type="STRING" id="343509.SG0531"/>
<dbReference type="KEGG" id="sgl:SG0531"/>
<dbReference type="eggNOG" id="COG0249">
    <property type="taxonomic scope" value="Bacteria"/>
</dbReference>
<dbReference type="HOGENOM" id="CLU_002472_4_0_6"/>
<dbReference type="OrthoDB" id="9802448at2"/>
<dbReference type="BioCyc" id="SGLO343509:SGP1_RS04685-MONOMER"/>
<dbReference type="Proteomes" id="UP000001932">
    <property type="component" value="Chromosome"/>
</dbReference>
<dbReference type="GO" id="GO:0005829">
    <property type="term" value="C:cytosol"/>
    <property type="evidence" value="ECO:0007669"/>
    <property type="project" value="TreeGrafter"/>
</dbReference>
<dbReference type="GO" id="GO:0005524">
    <property type="term" value="F:ATP binding"/>
    <property type="evidence" value="ECO:0007669"/>
    <property type="project" value="UniProtKB-UniRule"/>
</dbReference>
<dbReference type="GO" id="GO:0140664">
    <property type="term" value="F:ATP-dependent DNA damage sensor activity"/>
    <property type="evidence" value="ECO:0007669"/>
    <property type="project" value="InterPro"/>
</dbReference>
<dbReference type="GO" id="GO:0003684">
    <property type="term" value="F:damaged DNA binding"/>
    <property type="evidence" value="ECO:0007669"/>
    <property type="project" value="UniProtKB-UniRule"/>
</dbReference>
<dbReference type="GO" id="GO:0030983">
    <property type="term" value="F:mismatched DNA binding"/>
    <property type="evidence" value="ECO:0007669"/>
    <property type="project" value="InterPro"/>
</dbReference>
<dbReference type="GO" id="GO:0006298">
    <property type="term" value="P:mismatch repair"/>
    <property type="evidence" value="ECO:0007669"/>
    <property type="project" value="UniProtKB-UniRule"/>
</dbReference>
<dbReference type="CDD" id="cd03284">
    <property type="entry name" value="ABC_MutS1"/>
    <property type="match status" value="1"/>
</dbReference>
<dbReference type="FunFam" id="1.10.1420.10:FF:000002">
    <property type="entry name" value="DNA mismatch repair protein MutS"/>
    <property type="match status" value="1"/>
</dbReference>
<dbReference type="FunFam" id="3.30.420.110:FF:000001">
    <property type="entry name" value="DNA mismatch repair protein MutS"/>
    <property type="match status" value="1"/>
</dbReference>
<dbReference type="FunFam" id="3.40.1170.10:FF:000001">
    <property type="entry name" value="DNA mismatch repair protein MutS"/>
    <property type="match status" value="1"/>
</dbReference>
<dbReference type="FunFam" id="3.40.50.300:FF:000283">
    <property type="entry name" value="DNA mismatch repair protein MutS"/>
    <property type="match status" value="1"/>
</dbReference>
<dbReference type="Gene3D" id="1.10.1420.10">
    <property type="match status" value="2"/>
</dbReference>
<dbReference type="Gene3D" id="6.10.140.430">
    <property type="match status" value="1"/>
</dbReference>
<dbReference type="Gene3D" id="3.40.1170.10">
    <property type="entry name" value="DNA repair protein MutS, domain I"/>
    <property type="match status" value="1"/>
</dbReference>
<dbReference type="Gene3D" id="3.30.420.110">
    <property type="entry name" value="MutS, connector domain"/>
    <property type="match status" value="1"/>
</dbReference>
<dbReference type="Gene3D" id="3.40.50.300">
    <property type="entry name" value="P-loop containing nucleotide triphosphate hydrolases"/>
    <property type="match status" value="1"/>
</dbReference>
<dbReference type="HAMAP" id="MF_00096">
    <property type="entry name" value="MutS"/>
    <property type="match status" value="1"/>
</dbReference>
<dbReference type="InterPro" id="IPR005748">
    <property type="entry name" value="DNA_mismatch_repair_MutS"/>
</dbReference>
<dbReference type="InterPro" id="IPR007695">
    <property type="entry name" value="DNA_mismatch_repair_MutS-lik_N"/>
</dbReference>
<dbReference type="InterPro" id="IPR017261">
    <property type="entry name" value="DNA_mismatch_repair_MutS/MSH"/>
</dbReference>
<dbReference type="InterPro" id="IPR000432">
    <property type="entry name" value="DNA_mismatch_repair_MutS_C"/>
</dbReference>
<dbReference type="InterPro" id="IPR007861">
    <property type="entry name" value="DNA_mismatch_repair_MutS_clamp"/>
</dbReference>
<dbReference type="InterPro" id="IPR007696">
    <property type="entry name" value="DNA_mismatch_repair_MutS_core"/>
</dbReference>
<dbReference type="InterPro" id="IPR016151">
    <property type="entry name" value="DNA_mismatch_repair_MutS_N"/>
</dbReference>
<dbReference type="InterPro" id="IPR036187">
    <property type="entry name" value="DNA_mismatch_repair_MutS_sf"/>
</dbReference>
<dbReference type="InterPro" id="IPR007860">
    <property type="entry name" value="DNA_mmatch_repair_MutS_con_dom"/>
</dbReference>
<dbReference type="InterPro" id="IPR045076">
    <property type="entry name" value="MutS"/>
</dbReference>
<dbReference type="InterPro" id="IPR036678">
    <property type="entry name" value="MutS_con_dom_sf"/>
</dbReference>
<dbReference type="InterPro" id="IPR027417">
    <property type="entry name" value="P-loop_NTPase"/>
</dbReference>
<dbReference type="NCBIfam" id="TIGR01070">
    <property type="entry name" value="mutS1"/>
    <property type="match status" value="1"/>
</dbReference>
<dbReference type="NCBIfam" id="NF003810">
    <property type="entry name" value="PRK05399.1"/>
    <property type="match status" value="1"/>
</dbReference>
<dbReference type="PANTHER" id="PTHR11361:SF34">
    <property type="entry name" value="DNA MISMATCH REPAIR PROTEIN MSH1, MITOCHONDRIAL"/>
    <property type="match status" value="1"/>
</dbReference>
<dbReference type="PANTHER" id="PTHR11361">
    <property type="entry name" value="DNA MISMATCH REPAIR PROTEIN MUTS FAMILY MEMBER"/>
    <property type="match status" value="1"/>
</dbReference>
<dbReference type="Pfam" id="PF01624">
    <property type="entry name" value="MutS_I"/>
    <property type="match status" value="1"/>
</dbReference>
<dbReference type="Pfam" id="PF05188">
    <property type="entry name" value="MutS_II"/>
    <property type="match status" value="1"/>
</dbReference>
<dbReference type="Pfam" id="PF05192">
    <property type="entry name" value="MutS_III"/>
    <property type="match status" value="1"/>
</dbReference>
<dbReference type="Pfam" id="PF05190">
    <property type="entry name" value="MutS_IV"/>
    <property type="match status" value="1"/>
</dbReference>
<dbReference type="Pfam" id="PF00488">
    <property type="entry name" value="MutS_V"/>
    <property type="match status" value="1"/>
</dbReference>
<dbReference type="PIRSF" id="PIRSF037677">
    <property type="entry name" value="DNA_mis_repair_Msh6"/>
    <property type="match status" value="1"/>
</dbReference>
<dbReference type="SMART" id="SM00534">
    <property type="entry name" value="MUTSac"/>
    <property type="match status" value="1"/>
</dbReference>
<dbReference type="SMART" id="SM00533">
    <property type="entry name" value="MUTSd"/>
    <property type="match status" value="1"/>
</dbReference>
<dbReference type="SUPFAM" id="SSF55271">
    <property type="entry name" value="DNA repair protein MutS, domain I"/>
    <property type="match status" value="1"/>
</dbReference>
<dbReference type="SUPFAM" id="SSF53150">
    <property type="entry name" value="DNA repair protein MutS, domain II"/>
    <property type="match status" value="1"/>
</dbReference>
<dbReference type="SUPFAM" id="SSF48334">
    <property type="entry name" value="DNA repair protein MutS, domain III"/>
    <property type="match status" value="1"/>
</dbReference>
<dbReference type="SUPFAM" id="SSF52540">
    <property type="entry name" value="P-loop containing nucleoside triphosphate hydrolases"/>
    <property type="match status" value="1"/>
</dbReference>
<dbReference type="PROSITE" id="PS00486">
    <property type="entry name" value="DNA_MISMATCH_REPAIR_2"/>
    <property type="match status" value="1"/>
</dbReference>
<accession>Q2NVL9</accession>
<feature type="chain" id="PRO_1000008103" description="DNA mismatch repair protein MutS">
    <location>
        <begin position="1"/>
        <end position="854"/>
    </location>
</feature>
<feature type="binding site" evidence="1">
    <location>
        <begin position="614"/>
        <end position="621"/>
    </location>
    <ligand>
        <name>ATP</name>
        <dbReference type="ChEBI" id="CHEBI:30616"/>
    </ligand>
</feature>
<sequence length="854" mass="94890">MIDTKNLDSHTPMMQQYLKLKAQHPDILLFYRMGDFYELFYDDAKRASQLMDISLTKRGASAGQPIPMAGVPYHAVENYLAKLVALGESVAICEQIGDPATTKGPVERRVVRIVTPGTLSDEALLNERQDNLLAALWQAPQGFGYATLDITSGRFLVSEPADREAMAAELQRTNPAELLYPETLQDMKLIEHRRGQRRRPLWEFELDTARQQLTLQFGTRDLNGFGIERAQLALRAAGCLLQYAKDTQRTSLPHIRAVTLELQQDGIVMDAATRRNLELTQNLSGGGENTLADVLDRTVTPMGSRMLKRWLHMPTRDITTLTYRQQSIRALQDHVAELQPLLRQVGDLERVLARLALRSARPRDLARMRYAFTQLPAIQALLCGQSEPYLPQLLDRVGEFETLRDLLARAIIEAPPVLVRDGGVIAPGYHAELDEWRGLAAGATDYLDRLELREREKTGLETLKVGFNAVHGYFIQLSRGQSHLVPIHYVRRQTLKNAERYIIPELKEYEDKVLTSKSKALALEKALYDELFDLLLPHLAALQQSATALAELDVLSNLAERAETLRYVCPTIDARQGIHISGGRHPVVEHVLSEPFIANPLTLSDARRMLIITGPNMGGKSTYMRQTALIVLLAYIGSFVPADEATIGPIDRIFTRVGAADDLASGRSTFMVEMTETANILHNATHQSLVLMDEIGRGTSTYDGLSLAWASAESLAGRIKAMTLFATHYFELTTLPEKMEGVVNVHLDAVEHGDTIAFMHSVQEGAASKSYGLSVAALAGVPREVIKRARQKLRELETLSTGAAAGSVDGSQLSLLQPEEQPVAPAVEALENLDPDSLSPRQALEWLYRLKKML</sequence>
<evidence type="ECO:0000255" key="1">
    <source>
        <dbReference type="HAMAP-Rule" id="MF_00096"/>
    </source>
</evidence>
<keyword id="KW-0067">ATP-binding</keyword>
<keyword id="KW-0227">DNA damage</keyword>
<keyword id="KW-0234">DNA repair</keyword>
<keyword id="KW-0238">DNA-binding</keyword>
<keyword id="KW-0547">Nucleotide-binding</keyword>
<reference key="1">
    <citation type="journal article" date="2006" name="Genome Res.">
        <title>Massive genome erosion and functional adaptations provide insights into the symbiotic lifestyle of Sodalis glossinidius in the tsetse host.</title>
        <authorList>
            <person name="Toh H."/>
            <person name="Weiss B.L."/>
            <person name="Perkin S.A.H."/>
            <person name="Yamashita A."/>
            <person name="Oshima K."/>
            <person name="Hattori M."/>
            <person name="Aksoy S."/>
        </authorList>
    </citation>
    <scope>NUCLEOTIDE SEQUENCE [LARGE SCALE GENOMIC DNA]</scope>
    <source>
        <strain>morsitans</strain>
    </source>
</reference>